<gene>
    <name evidence="1" type="primary">pcyA</name>
    <name type="ordered locus">PCC7424_1047</name>
</gene>
<name>PCYA_GLOC7</name>
<accession>B7KJQ2</accession>
<keyword id="KW-0560">Oxidoreductase</keyword>
<keyword id="KW-1185">Reference proteome</keyword>
<sequence length="245" mass="28184">MLDTAKSSIRQQQHPLISRLADLILSYWEKYLELDPYQLPDGLGYVEGRLEGEKLVIENHCYHTPQFRKMHLELAKLGNNLDILHCVMFPNPHYPLPMFGCDIVASKAGVSAAIADLSPTNPQGTLPTTYQKVLSSLPKRDFSQRRDLPPWGDIFSEFCLFIRPTNSTEETFFLERVEQFLELHCRQSLIAQPLSSNEQALYLAGQYNYCSQQQKNDKTRRVLEKAFGAEWADKYINLVLFDLPD</sequence>
<dbReference type="EC" id="1.3.7.5" evidence="1"/>
<dbReference type="EMBL" id="CP001291">
    <property type="protein sequence ID" value="ACK69501.1"/>
    <property type="molecule type" value="Genomic_DNA"/>
</dbReference>
<dbReference type="RefSeq" id="WP_012598447.1">
    <property type="nucleotide sequence ID" value="NC_011729.1"/>
</dbReference>
<dbReference type="SMR" id="B7KJQ2"/>
<dbReference type="STRING" id="65393.PCC7424_1047"/>
<dbReference type="KEGG" id="cyc:PCC7424_1047"/>
<dbReference type="eggNOG" id="ENOG502Z7RN">
    <property type="taxonomic scope" value="Bacteria"/>
</dbReference>
<dbReference type="HOGENOM" id="CLU_074224_0_0_3"/>
<dbReference type="OrthoDB" id="581340at2"/>
<dbReference type="Proteomes" id="UP000002384">
    <property type="component" value="Chromosome"/>
</dbReference>
<dbReference type="GO" id="GO:0050897">
    <property type="term" value="F:cobalt ion binding"/>
    <property type="evidence" value="ECO:0007669"/>
    <property type="project" value="InterPro"/>
</dbReference>
<dbReference type="GO" id="GO:0050620">
    <property type="term" value="F:phycocyanobilin:ferredoxin oxidoreductase activity"/>
    <property type="evidence" value="ECO:0007669"/>
    <property type="project" value="UniProtKB-UniRule"/>
</dbReference>
<dbReference type="GO" id="GO:0010024">
    <property type="term" value="P:phytochromobilin biosynthetic process"/>
    <property type="evidence" value="ECO:0007669"/>
    <property type="project" value="InterPro"/>
</dbReference>
<dbReference type="Gene3D" id="3.40.1500.20">
    <property type="match status" value="1"/>
</dbReference>
<dbReference type="HAMAP" id="MF_00618">
    <property type="entry name" value="Ferredoxin_bilin_red"/>
    <property type="match status" value="1"/>
</dbReference>
<dbReference type="InterPro" id="IPR009249">
    <property type="entry name" value="Ferredoxin-dep_bilin_Rdtase"/>
</dbReference>
<dbReference type="InterPro" id="IPR022870">
    <property type="entry name" value="Ferredoxin_bilin_OxRdtase"/>
</dbReference>
<dbReference type="NCBIfam" id="NF002760">
    <property type="entry name" value="PRK02816.1"/>
    <property type="match status" value="1"/>
</dbReference>
<dbReference type="PANTHER" id="PTHR34557">
    <property type="entry name" value="PHYTOCHROMOBILIN:FERREDOXIN OXIDOREDUCTASE, CHLOROPLASTIC"/>
    <property type="match status" value="1"/>
</dbReference>
<dbReference type="PANTHER" id="PTHR34557:SF1">
    <property type="entry name" value="PHYTOCHROMOBILIN:FERREDOXIN OXIDOREDUCTASE, CHLOROPLASTIC"/>
    <property type="match status" value="1"/>
</dbReference>
<dbReference type="Pfam" id="PF05996">
    <property type="entry name" value="Fe_bilin_red"/>
    <property type="match status" value="1"/>
</dbReference>
<comment type="function">
    <text evidence="1">Catalyzes the four-electron reduction of biliverdin IX-alpha (2-electron reduction at both the A and D rings); the reaction proceeds via an isolatable 2-electron intermediate, 181,182-dihydrobiliverdin.</text>
</comment>
<comment type="catalytic activity">
    <reaction evidence="1">
        <text>(2R,3Z)-phycocyanobilin + 4 oxidized [2Fe-2S]-[ferredoxin] = biliverdin IXalpha + 4 reduced [2Fe-2S]-[ferredoxin] + 4 H(+)</text>
        <dbReference type="Rhea" id="RHEA:15309"/>
        <dbReference type="Rhea" id="RHEA-COMP:10000"/>
        <dbReference type="Rhea" id="RHEA-COMP:10001"/>
        <dbReference type="ChEBI" id="CHEBI:15378"/>
        <dbReference type="ChEBI" id="CHEBI:33737"/>
        <dbReference type="ChEBI" id="CHEBI:33738"/>
        <dbReference type="ChEBI" id="CHEBI:57437"/>
        <dbReference type="ChEBI" id="CHEBI:57991"/>
        <dbReference type="EC" id="1.3.7.5"/>
    </reaction>
</comment>
<comment type="similarity">
    <text evidence="1">Belongs to the HY2 family.</text>
</comment>
<reference key="1">
    <citation type="journal article" date="2011" name="MBio">
        <title>Novel metabolic attributes of the genus Cyanothece, comprising a group of unicellular nitrogen-fixing Cyanobacteria.</title>
        <authorList>
            <person name="Bandyopadhyay A."/>
            <person name="Elvitigala T."/>
            <person name="Welsh E."/>
            <person name="Stockel J."/>
            <person name="Liberton M."/>
            <person name="Min H."/>
            <person name="Sherman L.A."/>
            <person name="Pakrasi H.B."/>
        </authorList>
    </citation>
    <scope>NUCLEOTIDE SEQUENCE [LARGE SCALE GENOMIC DNA]</scope>
    <source>
        <strain>PCC 7424</strain>
    </source>
</reference>
<protein>
    <recommendedName>
        <fullName evidence="1">Phycocyanobilin:ferredoxin oxidoreductase</fullName>
        <ecNumber evidence="1">1.3.7.5</ecNumber>
    </recommendedName>
</protein>
<organism>
    <name type="scientific">Gloeothece citriformis (strain PCC 7424)</name>
    <name type="common">Cyanothece sp. (strain PCC 7424)</name>
    <dbReference type="NCBI Taxonomy" id="65393"/>
    <lineage>
        <taxon>Bacteria</taxon>
        <taxon>Bacillati</taxon>
        <taxon>Cyanobacteriota</taxon>
        <taxon>Cyanophyceae</taxon>
        <taxon>Oscillatoriophycideae</taxon>
        <taxon>Chroococcales</taxon>
        <taxon>Aphanothecaceae</taxon>
        <taxon>Gloeothece</taxon>
        <taxon>Gloeothece citriformis</taxon>
    </lineage>
</organism>
<proteinExistence type="inferred from homology"/>
<feature type="chain" id="PRO_1000130439" description="Phycocyanobilin:ferredoxin oxidoreductase">
    <location>
        <begin position="1"/>
        <end position="245"/>
    </location>
</feature>
<evidence type="ECO:0000255" key="1">
    <source>
        <dbReference type="HAMAP-Rule" id="MF_00618"/>
    </source>
</evidence>